<keyword id="KW-0548">Nucleotidyltransferase</keyword>
<keyword id="KW-1185">Reference proteome</keyword>
<keyword id="KW-0694">RNA-binding</keyword>
<keyword id="KW-0698">rRNA processing</keyword>
<keyword id="KW-0808">Transferase</keyword>
<keyword id="KW-0819">tRNA processing</keyword>
<keyword id="KW-0820">tRNA-binding</keyword>
<sequence>MRPNNRAINQPRPIKITRHYTKHAEGSVLVEFGDTKVLCTATVDESVPRFLKGQGQGWVTAEYGMLPRSTHSRMQREAAKGKQGGRTMEIQRLIARSLRAMVDLEALGERSVTLDCDVIQADGGTRTASITGACVALIDAVNGLVDNGTLTVSPLKGLVAAISVGIVDGTPVCDLEYVEDSAAETDMNVVMMEDGRMIEVQGTAEGEPFSHEELLTLLNLAKQGCKRIFEAQRAALAD</sequence>
<proteinExistence type="inferred from homology"/>
<accession>A6VLF1</accession>
<protein>
    <recommendedName>
        <fullName evidence="1">Ribonuclease PH</fullName>
        <shortName evidence="1">RNase PH</shortName>
        <ecNumber evidence="1">2.7.7.56</ecNumber>
    </recommendedName>
    <alternativeName>
        <fullName evidence="1">tRNA nucleotidyltransferase</fullName>
    </alternativeName>
</protein>
<comment type="function">
    <text evidence="1">Phosphorolytic 3'-5' exoribonuclease that plays an important role in tRNA 3'-end maturation. Removes nucleotide residues following the 3'-CCA terminus of tRNAs; can also add nucleotides to the ends of RNA molecules by using nucleoside diphosphates as substrates, but this may not be physiologically important. Probably plays a role in initiation of 16S rRNA degradation (leading to ribosome degradation) during starvation.</text>
</comment>
<comment type="catalytic activity">
    <reaction evidence="1">
        <text>tRNA(n+1) + phosphate = tRNA(n) + a ribonucleoside 5'-diphosphate</text>
        <dbReference type="Rhea" id="RHEA:10628"/>
        <dbReference type="Rhea" id="RHEA-COMP:17343"/>
        <dbReference type="Rhea" id="RHEA-COMP:17344"/>
        <dbReference type="ChEBI" id="CHEBI:43474"/>
        <dbReference type="ChEBI" id="CHEBI:57930"/>
        <dbReference type="ChEBI" id="CHEBI:173114"/>
        <dbReference type="EC" id="2.7.7.56"/>
    </reaction>
</comment>
<comment type="subunit">
    <text evidence="1">Homohexameric ring arranged as a trimer of dimers.</text>
</comment>
<comment type="similarity">
    <text evidence="1">Belongs to the RNase PH family.</text>
</comment>
<dbReference type="EC" id="2.7.7.56" evidence="1"/>
<dbReference type="EMBL" id="CP000746">
    <property type="protein sequence ID" value="ABR73798.1"/>
    <property type="molecule type" value="Genomic_DNA"/>
</dbReference>
<dbReference type="RefSeq" id="WP_012072183.1">
    <property type="nucleotide sequence ID" value="NC_009655.1"/>
</dbReference>
<dbReference type="SMR" id="A6VLF1"/>
<dbReference type="STRING" id="339671.Asuc_0420"/>
<dbReference type="KEGG" id="asu:Asuc_0420"/>
<dbReference type="eggNOG" id="COG0689">
    <property type="taxonomic scope" value="Bacteria"/>
</dbReference>
<dbReference type="HOGENOM" id="CLU_050858_0_0_6"/>
<dbReference type="OrthoDB" id="9802265at2"/>
<dbReference type="Proteomes" id="UP000001114">
    <property type="component" value="Chromosome"/>
</dbReference>
<dbReference type="GO" id="GO:0000175">
    <property type="term" value="F:3'-5'-RNA exonuclease activity"/>
    <property type="evidence" value="ECO:0007669"/>
    <property type="project" value="UniProtKB-UniRule"/>
</dbReference>
<dbReference type="GO" id="GO:0000049">
    <property type="term" value="F:tRNA binding"/>
    <property type="evidence" value="ECO:0007669"/>
    <property type="project" value="UniProtKB-UniRule"/>
</dbReference>
<dbReference type="GO" id="GO:0009022">
    <property type="term" value="F:tRNA nucleotidyltransferase activity"/>
    <property type="evidence" value="ECO:0007669"/>
    <property type="project" value="UniProtKB-UniRule"/>
</dbReference>
<dbReference type="GO" id="GO:0016075">
    <property type="term" value="P:rRNA catabolic process"/>
    <property type="evidence" value="ECO:0007669"/>
    <property type="project" value="UniProtKB-UniRule"/>
</dbReference>
<dbReference type="GO" id="GO:0006364">
    <property type="term" value="P:rRNA processing"/>
    <property type="evidence" value="ECO:0007669"/>
    <property type="project" value="UniProtKB-KW"/>
</dbReference>
<dbReference type="GO" id="GO:0008033">
    <property type="term" value="P:tRNA processing"/>
    <property type="evidence" value="ECO:0007669"/>
    <property type="project" value="UniProtKB-UniRule"/>
</dbReference>
<dbReference type="CDD" id="cd11362">
    <property type="entry name" value="RNase_PH_bact"/>
    <property type="match status" value="1"/>
</dbReference>
<dbReference type="FunFam" id="3.30.230.70:FF:000003">
    <property type="entry name" value="Ribonuclease PH"/>
    <property type="match status" value="1"/>
</dbReference>
<dbReference type="Gene3D" id="3.30.230.70">
    <property type="entry name" value="GHMP Kinase, N-terminal domain"/>
    <property type="match status" value="1"/>
</dbReference>
<dbReference type="HAMAP" id="MF_00564">
    <property type="entry name" value="RNase_PH"/>
    <property type="match status" value="1"/>
</dbReference>
<dbReference type="InterPro" id="IPR001247">
    <property type="entry name" value="ExoRNase_PH_dom1"/>
</dbReference>
<dbReference type="InterPro" id="IPR015847">
    <property type="entry name" value="ExoRNase_PH_dom2"/>
</dbReference>
<dbReference type="InterPro" id="IPR036345">
    <property type="entry name" value="ExoRNase_PH_dom2_sf"/>
</dbReference>
<dbReference type="InterPro" id="IPR027408">
    <property type="entry name" value="PNPase/RNase_PH_dom_sf"/>
</dbReference>
<dbReference type="InterPro" id="IPR020568">
    <property type="entry name" value="Ribosomal_Su5_D2-typ_SF"/>
</dbReference>
<dbReference type="InterPro" id="IPR050080">
    <property type="entry name" value="RNase_PH"/>
</dbReference>
<dbReference type="InterPro" id="IPR002381">
    <property type="entry name" value="RNase_PH_bac-type"/>
</dbReference>
<dbReference type="InterPro" id="IPR018336">
    <property type="entry name" value="RNase_PH_CS"/>
</dbReference>
<dbReference type="NCBIfam" id="TIGR01966">
    <property type="entry name" value="RNasePH"/>
    <property type="match status" value="1"/>
</dbReference>
<dbReference type="PANTHER" id="PTHR11953">
    <property type="entry name" value="EXOSOME COMPLEX COMPONENT"/>
    <property type="match status" value="1"/>
</dbReference>
<dbReference type="PANTHER" id="PTHR11953:SF0">
    <property type="entry name" value="EXOSOME COMPLEX COMPONENT RRP41"/>
    <property type="match status" value="1"/>
</dbReference>
<dbReference type="Pfam" id="PF01138">
    <property type="entry name" value="RNase_PH"/>
    <property type="match status" value="1"/>
</dbReference>
<dbReference type="Pfam" id="PF03725">
    <property type="entry name" value="RNase_PH_C"/>
    <property type="match status" value="1"/>
</dbReference>
<dbReference type="SUPFAM" id="SSF55666">
    <property type="entry name" value="Ribonuclease PH domain 2-like"/>
    <property type="match status" value="1"/>
</dbReference>
<dbReference type="SUPFAM" id="SSF54211">
    <property type="entry name" value="Ribosomal protein S5 domain 2-like"/>
    <property type="match status" value="1"/>
</dbReference>
<dbReference type="PROSITE" id="PS01277">
    <property type="entry name" value="RIBONUCLEASE_PH"/>
    <property type="match status" value="1"/>
</dbReference>
<gene>
    <name evidence="1" type="primary">rph</name>
    <name type="ordered locus">Asuc_0420</name>
</gene>
<feature type="chain" id="PRO_1000072563" description="Ribonuclease PH">
    <location>
        <begin position="1"/>
        <end position="238"/>
    </location>
</feature>
<feature type="binding site" evidence="1">
    <location>
        <position position="86"/>
    </location>
    <ligand>
        <name>phosphate</name>
        <dbReference type="ChEBI" id="CHEBI:43474"/>
        <note>substrate</note>
    </ligand>
</feature>
<feature type="binding site" evidence="1">
    <location>
        <begin position="124"/>
        <end position="126"/>
    </location>
    <ligand>
        <name>phosphate</name>
        <dbReference type="ChEBI" id="CHEBI:43474"/>
        <note>substrate</note>
    </ligand>
</feature>
<evidence type="ECO:0000255" key="1">
    <source>
        <dbReference type="HAMAP-Rule" id="MF_00564"/>
    </source>
</evidence>
<name>RNPH_ACTSZ</name>
<organism>
    <name type="scientific">Actinobacillus succinogenes (strain ATCC 55618 / DSM 22257 / CCUG 43843 / 130Z)</name>
    <dbReference type="NCBI Taxonomy" id="339671"/>
    <lineage>
        <taxon>Bacteria</taxon>
        <taxon>Pseudomonadati</taxon>
        <taxon>Pseudomonadota</taxon>
        <taxon>Gammaproteobacteria</taxon>
        <taxon>Pasteurellales</taxon>
        <taxon>Pasteurellaceae</taxon>
        <taxon>Actinobacillus</taxon>
    </lineage>
</organism>
<reference key="1">
    <citation type="journal article" date="2010" name="BMC Genomics">
        <title>A genomic perspective on the potential of Actinobacillus succinogenes for industrial succinate production.</title>
        <authorList>
            <person name="McKinlay J.B."/>
            <person name="Laivenieks M."/>
            <person name="Schindler B.D."/>
            <person name="McKinlay A.A."/>
            <person name="Siddaramappa S."/>
            <person name="Challacombe J.F."/>
            <person name="Lowry S.R."/>
            <person name="Clum A."/>
            <person name="Lapidus A.L."/>
            <person name="Burkhart K.B."/>
            <person name="Harkins V."/>
            <person name="Vieille C."/>
        </authorList>
    </citation>
    <scope>NUCLEOTIDE SEQUENCE [LARGE SCALE GENOMIC DNA]</scope>
    <source>
        <strain>ATCC 55618 / DSM 22257 / CCUG 43843 / 130Z</strain>
    </source>
</reference>